<comment type="function">
    <text evidence="1">Involved in base excision repair of DNA damaged by oxidation or by mutagenic agents. Acts as a DNA glycosylase that recognizes and removes damaged bases. Has a preference for oxidized pyrimidines, such as thymine glycol, 5,6-dihydrouracil and 5,6-dihydrothymine. Has AP (apurinic/apyrimidinic) lyase activity and introduces nicks in the DNA strand. Cleaves the DNA backbone by beta-delta elimination to generate a single-strand break at the site of the removed base with both 3'- and 5'-phosphates.</text>
</comment>
<comment type="catalytic activity">
    <reaction evidence="1">
        <text>2'-deoxyribonucleotide-(2'-deoxyribose 5'-phosphate)-2'-deoxyribonucleotide-DNA = a 3'-end 2'-deoxyribonucleotide-(2,3-dehydro-2,3-deoxyribose 5'-phosphate)-DNA + a 5'-end 5'-phospho-2'-deoxyribonucleoside-DNA + H(+)</text>
        <dbReference type="Rhea" id="RHEA:66592"/>
        <dbReference type="Rhea" id="RHEA-COMP:13180"/>
        <dbReference type="Rhea" id="RHEA-COMP:16897"/>
        <dbReference type="Rhea" id="RHEA-COMP:17067"/>
        <dbReference type="ChEBI" id="CHEBI:15378"/>
        <dbReference type="ChEBI" id="CHEBI:136412"/>
        <dbReference type="ChEBI" id="CHEBI:157695"/>
        <dbReference type="ChEBI" id="CHEBI:167181"/>
        <dbReference type="EC" id="4.2.99.18"/>
    </reaction>
</comment>
<comment type="cofactor">
    <cofactor evidence="1">
        <name>Zn(2+)</name>
        <dbReference type="ChEBI" id="CHEBI:29105"/>
    </cofactor>
    <text evidence="1">Binds 1 zinc ion per subunit.</text>
</comment>
<comment type="similarity">
    <text evidence="1">Belongs to the FPG family.</text>
</comment>
<keyword id="KW-0227">DNA damage</keyword>
<keyword id="KW-0234">DNA repair</keyword>
<keyword id="KW-0238">DNA-binding</keyword>
<keyword id="KW-0326">Glycosidase</keyword>
<keyword id="KW-0378">Hydrolase</keyword>
<keyword id="KW-0456">Lyase</keyword>
<keyword id="KW-0479">Metal-binding</keyword>
<keyword id="KW-0511">Multifunctional enzyme</keyword>
<keyword id="KW-0862">Zinc</keyword>
<keyword id="KW-0863">Zinc-finger</keyword>
<gene>
    <name evidence="1" type="primary">nei</name>
    <name type="ordered locus">KPK_3844</name>
</gene>
<dbReference type="EC" id="3.2.2.-" evidence="1"/>
<dbReference type="EC" id="4.2.99.18" evidence="1"/>
<dbReference type="EMBL" id="CP000964">
    <property type="protein sequence ID" value="ACI06680.1"/>
    <property type="molecule type" value="Genomic_DNA"/>
</dbReference>
<dbReference type="SMR" id="B5XZD9"/>
<dbReference type="KEGG" id="kpe:KPK_3844"/>
<dbReference type="HOGENOM" id="CLU_038423_2_2_6"/>
<dbReference type="Proteomes" id="UP000001734">
    <property type="component" value="Chromosome"/>
</dbReference>
<dbReference type="GO" id="GO:0140078">
    <property type="term" value="F:class I DNA-(apurinic or apyrimidinic site) endonuclease activity"/>
    <property type="evidence" value="ECO:0007669"/>
    <property type="project" value="UniProtKB-EC"/>
</dbReference>
<dbReference type="GO" id="GO:0003684">
    <property type="term" value="F:damaged DNA binding"/>
    <property type="evidence" value="ECO:0007669"/>
    <property type="project" value="InterPro"/>
</dbReference>
<dbReference type="GO" id="GO:0000703">
    <property type="term" value="F:oxidized pyrimidine nucleobase lesion DNA N-glycosylase activity"/>
    <property type="evidence" value="ECO:0007669"/>
    <property type="project" value="UniProtKB-UniRule"/>
</dbReference>
<dbReference type="GO" id="GO:0008270">
    <property type="term" value="F:zinc ion binding"/>
    <property type="evidence" value="ECO:0007669"/>
    <property type="project" value="UniProtKB-UniRule"/>
</dbReference>
<dbReference type="GO" id="GO:0006284">
    <property type="term" value="P:base-excision repair"/>
    <property type="evidence" value="ECO:0007669"/>
    <property type="project" value="InterPro"/>
</dbReference>
<dbReference type="CDD" id="cd08965">
    <property type="entry name" value="EcNei-like_N"/>
    <property type="match status" value="1"/>
</dbReference>
<dbReference type="FunFam" id="1.10.8.50:FF:000005">
    <property type="entry name" value="Endonuclease 8"/>
    <property type="match status" value="1"/>
</dbReference>
<dbReference type="FunFam" id="3.20.190.10:FF:000002">
    <property type="entry name" value="Endonuclease 8"/>
    <property type="match status" value="1"/>
</dbReference>
<dbReference type="Gene3D" id="1.10.8.50">
    <property type="match status" value="1"/>
</dbReference>
<dbReference type="Gene3D" id="3.20.190.10">
    <property type="entry name" value="MutM-like, N-terminal"/>
    <property type="match status" value="1"/>
</dbReference>
<dbReference type="HAMAP" id="MF_01253">
    <property type="entry name" value="Endonuclease_8"/>
    <property type="match status" value="1"/>
</dbReference>
<dbReference type="InterPro" id="IPR015886">
    <property type="entry name" value="DNA_glyclase/AP_lyase_DNA-bd"/>
</dbReference>
<dbReference type="InterPro" id="IPR015887">
    <property type="entry name" value="DNA_glyclase_Znf_dom_DNA_BS"/>
</dbReference>
<dbReference type="InterPro" id="IPR044091">
    <property type="entry name" value="EcNei-like_N"/>
</dbReference>
<dbReference type="InterPro" id="IPR023713">
    <property type="entry name" value="Endonuclease-VIII"/>
</dbReference>
<dbReference type="InterPro" id="IPR012319">
    <property type="entry name" value="FPG_cat"/>
</dbReference>
<dbReference type="InterPro" id="IPR035937">
    <property type="entry name" value="MutM-like_N-ter"/>
</dbReference>
<dbReference type="InterPro" id="IPR010979">
    <property type="entry name" value="Ribosomal_uS13-like_H2TH"/>
</dbReference>
<dbReference type="InterPro" id="IPR000214">
    <property type="entry name" value="Znf_DNA_glyclase/AP_lyase"/>
</dbReference>
<dbReference type="InterPro" id="IPR010663">
    <property type="entry name" value="Znf_FPG/IleRS"/>
</dbReference>
<dbReference type="NCBIfam" id="NF007763">
    <property type="entry name" value="PRK10445.1"/>
    <property type="match status" value="1"/>
</dbReference>
<dbReference type="PANTHER" id="PTHR42697">
    <property type="entry name" value="ENDONUCLEASE 8"/>
    <property type="match status" value="1"/>
</dbReference>
<dbReference type="PANTHER" id="PTHR42697:SF1">
    <property type="entry name" value="ENDONUCLEASE 8"/>
    <property type="match status" value="1"/>
</dbReference>
<dbReference type="Pfam" id="PF01149">
    <property type="entry name" value="Fapy_DNA_glyco"/>
    <property type="match status" value="1"/>
</dbReference>
<dbReference type="Pfam" id="PF06831">
    <property type="entry name" value="H2TH"/>
    <property type="match status" value="1"/>
</dbReference>
<dbReference type="Pfam" id="PF06827">
    <property type="entry name" value="zf-FPG_IleRS"/>
    <property type="match status" value="1"/>
</dbReference>
<dbReference type="SMART" id="SM00898">
    <property type="entry name" value="Fapy_DNA_glyco"/>
    <property type="match status" value="1"/>
</dbReference>
<dbReference type="SMART" id="SM01232">
    <property type="entry name" value="H2TH"/>
    <property type="match status" value="1"/>
</dbReference>
<dbReference type="SUPFAM" id="SSF57716">
    <property type="entry name" value="Glucocorticoid receptor-like (DNA-binding domain)"/>
    <property type="match status" value="1"/>
</dbReference>
<dbReference type="SUPFAM" id="SSF81624">
    <property type="entry name" value="N-terminal domain of MutM-like DNA repair proteins"/>
    <property type="match status" value="1"/>
</dbReference>
<dbReference type="SUPFAM" id="SSF46946">
    <property type="entry name" value="S13-like H2TH domain"/>
    <property type="match status" value="1"/>
</dbReference>
<dbReference type="PROSITE" id="PS51068">
    <property type="entry name" value="FPG_CAT"/>
    <property type="match status" value="1"/>
</dbReference>
<dbReference type="PROSITE" id="PS01242">
    <property type="entry name" value="ZF_FPG_1"/>
    <property type="match status" value="1"/>
</dbReference>
<dbReference type="PROSITE" id="PS51066">
    <property type="entry name" value="ZF_FPG_2"/>
    <property type="match status" value="1"/>
</dbReference>
<protein>
    <recommendedName>
        <fullName evidence="1">Endonuclease 8</fullName>
    </recommendedName>
    <alternativeName>
        <fullName evidence="1">DNA glycosylase/AP lyase Nei</fullName>
        <ecNumber evidence="1">3.2.2.-</ecNumber>
        <ecNumber evidence="1">4.2.99.18</ecNumber>
    </alternativeName>
    <alternativeName>
        <fullName evidence="1">DNA-(apurinic or apyrimidinic site) lyase Nei</fullName>
    </alternativeName>
    <alternativeName>
        <fullName evidence="1">Endonuclease VIII</fullName>
    </alternativeName>
</protein>
<name>END8_KLEP3</name>
<organism>
    <name type="scientific">Klebsiella pneumoniae (strain 342)</name>
    <dbReference type="NCBI Taxonomy" id="507522"/>
    <lineage>
        <taxon>Bacteria</taxon>
        <taxon>Pseudomonadati</taxon>
        <taxon>Pseudomonadota</taxon>
        <taxon>Gammaproteobacteria</taxon>
        <taxon>Enterobacterales</taxon>
        <taxon>Enterobacteriaceae</taxon>
        <taxon>Klebsiella/Raoultella group</taxon>
        <taxon>Klebsiella</taxon>
        <taxon>Klebsiella pneumoniae complex</taxon>
    </lineage>
</organism>
<evidence type="ECO:0000255" key="1">
    <source>
        <dbReference type="HAMAP-Rule" id="MF_01253"/>
    </source>
</evidence>
<proteinExistence type="inferred from homology"/>
<reference key="1">
    <citation type="journal article" date="2008" name="PLoS Genet.">
        <title>Complete genome sequence of the N2-fixing broad host range endophyte Klebsiella pneumoniae 342 and virulence predictions verified in mice.</title>
        <authorList>
            <person name="Fouts D.E."/>
            <person name="Tyler H.L."/>
            <person name="DeBoy R.T."/>
            <person name="Daugherty S."/>
            <person name="Ren Q."/>
            <person name="Badger J.H."/>
            <person name="Durkin A.S."/>
            <person name="Huot H."/>
            <person name="Shrivastava S."/>
            <person name="Kothari S."/>
            <person name="Dodson R.J."/>
            <person name="Mohamoud Y."/>
            <person name="Khouri H."/>
            <person name="Roesch L.F.W."/>
            <person name="Krogfelt K.A."/>
            <person name="Struve C."/>
            <person name="Triplett E.W."/>
            <person name="Methe B.A."/>
        </authorList>
    </citation>
    <scope>NUCLEOTIDE SEQUENCE [LARGE SCALE GENOMIC DNA]</scope>
    <source>
        <strain>342</strain>
    </source>
</reference>
<sequence>MPEGPEIRRAADKLEAAIKGEPLTDAWFAFPQLQPYQSLLIGQRVTHIATRGKALLTHFSGGLTLYSHNQLYGVWRVVDAGEQPASNRVLRVRLQTARKAILLYSASDIEMLTAEQVAHHPFLLRVGPDVLDMTLTVEEVKARLLSAKFRHRQFSGLLLDQAFLAGLGNYLRVEILWQVGLSGKRKAAELSDSQLDALAHALLAIPRLSYHTRGQADDNKHHGALFRFKVFHRDGERCERCGGVIEKTTLSSRPFYWCPGCQH</sequence>
<feature type="initiator methionine" description="Removed" evidence="1">
    <location>
        <position position="1"/>
    </location>
</feature>
<feature type="chain" id="PRO_1000139938" description="Endonuclease 8">
    <location>
        <begin position="2"/>
        <end position="263"/>
    </location>
</feature>
<feature type="zinc finger region" description="FPG-type" evidence="1">
    <location>
        <begin position="229"/>
        <end position="263"/>
    </location>
</feature>
<feature type="active site" description="Schiff-base intermediate with DNA" evidence="1">
    <location>
        <position position="2"/>
    </location>
</feature>
<feature type="active site" description="Proton donor" evidence="1">
    <location>
        <position position="3"/>
    </location>
</feature>
<feature type="active site" description="Proton donor; for beta-elimination activity" evidence="1">
    <location>
        <position position="53"/>
    </location>
</feature>
<feature type="active site" description="Proton donor; for delta-elimination activity" evidence="1">
    <location>
        <position position="253"/>
    </location>
</feature>
<feature type="binding site" evidence="1">
    <location>
        <position position="70"/>
    </location>
    <ligand>
        <name>DNA</name>
        <dbReference type="ChEBI" id="CHEBI:16991"/>
    </ligand>
</feature>
<feature type="binding site" evidence="1">
    <location>
        <position position="125"/>
    </location>
    <ligand>
        <name>DNA</name>
        <dbReference type="ChEBI" id="CHEBI:16991"/>
    </ligand>
</feature>
<feature type="binding site" evidence="1">
    <location>
        <position position="169"/>
    </location>
    <ligand>
        <name>DNA</name>
        <dbReference type="ChEBI" id="CHEBI:16991"/>
    </ligand>
</feature>
<accession>B5XZD9</accession>